<name>XNI_VIBA3</name>
<keyword id="KW-0238">DNA-binding</keyword>
<keyword id="KW-0255">Endonuclease</keyword>
<keyword id="KW-0378">Hydrolase</keyword>
<keyword id="KW-0460">Magnesium</keyword>
<keyword id="KW-0479">Metal-binding</keyword>
<keyword id="KW-0540">Nuclease</keyword>
<keyword id="KW-0630">Potassium</keyword>
<sequence>MSIHLVIIDALNLIRRVHSVQSDPTDIARTITTTARTLNRILNESKPTHIIAVFDHHLQDRGWRAEVLPAYKQNRKPMPEPLMKGLDAIQQAWWELGIDSLLSDGDEADDLVATLAKKVADHGETVTIISTDKGYCQLLSPTLQIRDYFQHRWLDKPFIEAEFGVKPEQLADYWGLTGVSSSQVPGIPGIGPKAAKEILTTYPDIETAFLAEDLPKKYRKKFDEHIESARVCKLVSALKTDIDLGFNLQDIRYEAVS</sequence>
<organism>
    <name type="scientific">Vibrio atlanticus (strain LGP32)</name>
    <name type="common">Vibrio splendidus (strain Mel32)</name>
    <dbReference type="NCBI Taxonomy" id="575788"/>
    <lineage>
        <taxon>Bacteria</taxon>
        <taxon>Pseudomonadati</taxon>
        <taxon>Pseudomonadota</taxon>
        <taxon>Gammaproteobacteria</taxon>
        <taxon>Vibrionales</taxon>
        <taxon>Vibrionaceae</taxon>
        <taxon>Vibrio</taxon>
    </lineage>
</organism>
<reference key="1">
    <citation type="submission" date="2009-02" db="EMBL/GenBank/DDBJ databases">
        <title>Vibrio splendidus str. LGP32 complete genome.</title>
        <authorList>
            <person name="Mazel D."/>
            <person name="Le Roux F."/>
        </authorList>
    </citation>
    <scope>NUCLEOTIDE SEQUENCE [LARGE SCALE GENOMIC DNA]</scope>
    <source>
        <strain>LGP32</strain>
    </source>
</reference>
<gene>
    <name evidence="1" type="primary">xni</name>
    <name evidence="1" type="synonym">ygdG</name>
    <name type="ordered locus">VS_2394</name>
</gene>
<accession>B7VJ90</accession>
<protein>
    <recommendedName>
        <fullName evidence="1">Flap endonuclease Xni</fullName>
        <shortName evidence="1">FEN</shortName>
        <ecNumber evidence="1">3.1.-.-</ecNumber>
    </recommendedName>
</protein>
<proteinExistence type="inferred from homology"/>
<dbReference type="EC" id="3.1.-.-" evidence="1"/>
<dbReference type="EMBL" id="FM954972">
    <property type="protein sequence ID" value="CAV19554.1"/>
    <property type="molecule type" value="Genomic_DNA"/>
</dbReference>
<dbReference type="SMR" id="B7VJ90"/>
<dbReference type="STRING" id="575788.VS_2394"/>
<dbReference type="KEGG" id="vsp:VS_2394"/>
<dbReference type="PATRIC" id="fig|575788.5.peg.3657"/>
<dbReference type="eggNOG" id="COG0258">
    <property type="taxonomic scope" value="Bacteria"/>
</dbReference>
<dbReference type="HOGENOM" id="CLU_004675_1_2_6"/>
<dbReference type="Proteomes" id="UP000009100">
    <property type="component" value="Chromosome 1"/>
</dbReference>
<dbReference type="GO" id="GO:0008409">
    <property type="term" value="F:5'-3' exonuclease activity"/>
    <property type="evidence" value="ECO:0007669"/>
    <property type="project" value="InterPro"/>
</dbReference>
<dbReference type="GO" id="GO:0017108">
    <property type="term" value="F:5'-flap endonuclease activity"/>
    <property type="evidence" value="ECO:0007669"/>
    <property type="project" value="UniProtKB-UniRule"/>
</dbReference>
<dbReference type="GO" id="GO:0003677">
    <property type="term" value="F:DNA binding"/>
    <property type="evidence" value="ECO:0007669"/>
    <property type="project" value="UniProtKB-UniRule"/>
</dbReference>
<dbReference type="GO" id="GO:0000287">
    <property type="term" value="F:magnesium ion binding"/>
    <property type="evidence" value="ECO:0007669"/>
    <property type="project" value="UniProtKB-UniRule"/>
</dbReference>
<dbReference type="GO" id="GO:0030955">
    <property type="term" value="F:potassium ion binding"/>
    <property type="evidence" value="ECO:0007669"/>
    <property type="project" value="UniProtKB-UniRule"/>
</dbReference>
<dbReference type="GO" id="GO:0033567">
    <property type="term" value="P:DNA replication, Okazaki fragment processing"/>
    <property type="evidence" value="ECO:0007669"/>
    <property type="project" value="UniProtKB-UniRule"/>
</dbReference>
<dbReference type="CDD" id="cd09898">
    <property type="entry name" value="H3TH_53EXO"/>
    <property type="match status" value="1"/>
</dbReference>
<dbReference type="CDD" id="cd09859">
    <property type="entry name" value="PIN_53EXO"/>
    <property type="match status" value="1"/>
</dbReference>
<dbReference type="FunFam" id="1.10.150.20:FF:000003">
    <property type="entry name" value="DNA polymerase I"/>
    <property type="match status" value="1"/>
</dbReference>
<dbReference type="Gene3D" id="1.10.150.20">
    <property type="entry name" value="5' to 3' exonuclease, C-terminal subdomain"/>
    <property type="match status" value="1"/>
</dbReference>
<dbReference type="Gene3D" id="3.40.50.1010">
    <property type="entry name" value="5'-nuclease"/>
    <property type="match status" value="1"/>
</dbReference>
<dbReference type="HAMAP" id="MF_01192">
    <property type="entry name" value="Xni"/>
    <property type="match status" value="1"/>
</dbReference>
<dbReference type="InterPro" id="IPR020046">
    <property type="entry name" value="5-3_exonucl_a-hlix_arch_N"/>
</dbReference>
<dbReference type="InterPro" id="IPR002421">
    <property type="entry name" value="5-3_exonuclease"/>
</dbReference>
<dbReference type="InterPro" id="IPR036279">
    <property type="entry name" value="5-3_exonuclease_C_sf"/>
</dbReference>
<dbReference type="InterPro" id="IPR020045">
    <property type="entry name" value="DNA_polI_H3TH"/>
</dbReference>
<dbReference type="InterPro" id="IPR038969">
    <property type="entry name" value="FEN"/>
</dbReference>
<dbReference type="InterPro" id="IPR008918">
    <property type="entry name" value="HhH2"/>
</dbReference>
<dbReference type="InterPro" id="IPR029060">
    <property type="entry name" value="PIN-like_dom_sf"/>
</dbReference>
<dbReference type="InterPro" id="IPR022895">
    <property type="entry name" value="Xni"/>
</dbReference>
<dbReference type="NCBIfam" id="NF007017">
    <property type="entry name" value="PRK09482.1"/>
    <property type="match status" value="1"/>
</dbReference>
<dbReference type="PANTHER" id="PTHR42646:SF2">
    <property type="entry name" value="5'-3' EXONUCLEASE FAMILY PROTEIN"/>
    <property type="match status" value="1"/>
</dbReference>
<dbReference type="PANTHER" id="PTHR42646">
    <property type="entry name" value="FLAP ENDONUCLEASE XNI"/>
    <property type="match status" value="1"/>
</dbReference>
<dbReference type="Pfam" id="PF01367">
    <property type="entry name" value="5_3_exonuc"/>
    <property type="match status" value="1"/>
</dbReference>
<dbReference type="Pfam" id="PF02739">
    <property type="entry name" value="5_3_exonuc_N"/>
    <property type="match status" value="1"/>
</dbReference>
<dbReference type="SMART" id="SM00475">
    <property type="entry name" value="53EXOc"/>
    <property type="match status" value="1"/>
</dbReference>
<dbReference type="SMART" id="SM00279">
    <property type="entry name" value="HhH2"/>
    <property type="match status" value="1"/>
</dbReference>
<dbReference type="SUPFAM" id="SSF47807">
    <property type="entry name" value="5' to 3' exonuclease, C-terminal subdomain"/>
    <property type="match status" value="1"/>
</dbReference>
<dbReference type="SUPFAM" id="SSF88723">
    <property type="entry name" value="PIN domain-like"/>
    <property type="match status" value="1"/>
</dbReference>
<comment type="function">
    <text evidence="1">Has flap endonuclease activity. During DNA replication, flap endonucleases cleave the 5'-overhanging flap structure that is generated by displacement synthesis when DNA polymerase encounters the 5'-end of a downstream Okazaki fragment.</text>
</comment>
<comment type="cofactor">
    <cofactor evidence="1">
        <name>Mg(2+)</name>
        <dbReference type="ChEBI" id="CHEBI:18420"/>
    </cofactor>
    <text evidence="1">Binds 2 Mg(2+) per subunit. Only one magnesium ion has a direct interaction with the protein, the other interactions are indirect.</text>
</comment>
<comment type="cofactor">
    <cofactor evidence="1">
        <name>K(+)</name>
        <dbReference type="ChEBI" id="CHEBI:29103"/>
    </cofactor>
    <text evidence="1">Binds 1 K(+) per subunit. The potassium ion strongly increases the affinity for DNA.</text>
</comment>
<comment type="similarity">
    <text evidence="1">Belongs to the Xni family.</text>
</comment>
<evidence type="ECO:0000255" key="1">
    <source>
        <dbReference type="HAMAP-Rule" id="MF_01192"/>
    </source>
</evidence>
<feature type="chain" id="PRO_1000164505" description="Flap endonuclease Xni">
    <location>
        <begin position="1"/>
        <end position="257"/>
    </location>
</feature>
<feature type="domain" description="5'-3' exonuclease" evidence="1">
    <location>
        <begin position="165"/>
        <end position="254"/>
    </location>
</feature>
<feature type="region of interest" description="Interaction with DNA" evidence="1">
    <location>
        <begin position="189"/>
        <end position="194"/>
    </location>
</feature>
<feature type="binding site" evidence="1">
    <location>
        <position position="109"/>
    </location>
    <ligand>
        <name>Mg(2+)</name>
        <dbReference type="ChEBI" id="CHEBI:18420"/>
    </ligand>
</feature>
<feature type="binding site" evidence="1">
    <location>
        <position position="176"/>
    </location>
    <ligand>
        <name>K(+)</name>
        <dbReference type="ChEBI" id="CHEBI:29103"/>
    </ligand>
</feature>
<feature type="binding site" evidence="1">
    <location>
        <position position="185"/>
    </location>
    <ligand>
        <name>K(+)</name>
        <dbReference type="ChEBI" id="CHEBI:29103"/>
    </ligand>
</feature>
<feature type="binding site" evidence="1">
    <location>
        <position position="187"/>
    </location>
    <ligand>
        <name>K(+)</name>
        <dbReference type="ChEBI" id="CHEBI:29103"/>
    </ligand>
</feature>
<feature type="binding site" evidence="1">
    <location>
        <position position="190"/>
    </location>
    <ligand>
        <name>K(+)</name>
        <dbReference type="ChEBI" id="CHEBI:29103"/>
    </ligand>
</feature>